<reference key="1">
    <citation type="journal article" date="2002" name="Nature">
        <title>Comparison of the genomes of two Xanthomonas pathogens with differing host specificities.</title>
        <authorList>
            <person name="da Silva A.C.R."/>
            <person name="Ferro J.A."/>
            <person name="Reinach F.C."/>
            <person name="Farah C.S."/>
            <person name="Furlan L.R."/>
            <person name="Quaggio R.B."/>
            <person name="Monteiro-Vitorello C.B."/>
            <person name="Van Sluys M.A."/>
            <person name="Almeida N.F. Jr."/>
            <person name="Alves L.M.C."/>
            <person name="do Amaral A.M."/>
            <person name="Bertolini M.C."/>
            <person name="Camargo L.E.A."/>
            <person name="Camarotte G."/>
            <person name="Cannavan F."/>
            <person name="Cardozo J."/>
            <person name="Chambergo F."/>
            <person name="Ciapina L.P."/>
            <person name="Cicarelli R.M.B."/>
            <person name="Coutinho L.L."/>
            <person name="Cursino-Santos J.R."/>
            <person name="El-Dorry H."/>
            <person name="Faria J.B."/>
            <person name="Ferreira A.J.S."/>
            <person name="Ferreira R.C.C."/>
            <person name="Ferro M.I.T."/>
            <person name="Formighieri E.F."/>
            <person name="Franco M.C."/>
            <person name="Greggio C.C."/>
            <person name="Gruber A."/>
            <person name="Katsuyama A.M."/>
            <person name="Kishi L.T."/>
            <person name="Leite R.P."/>
            <person name="Lemos E.G.M."/>
            <person name="Lemos M.V.F."/>
            <person name="Locali E.C."/>
            <person name="Machado M.A."/>
            <person name="Madeira A.M.B.N."/>
            <person name="Martinez-Rossi N.M."/>
            <person name="Martins E.C."/>
            <person name="Meidanis J."/>
            <person name="Menck C.F.M."/>
            <person name="Miyaki C.Y."/>
            <person name="Moon D.H."/>
            <person name="Moreira L.M."/>
            <person name="Novo M.T.M."/>
            <person name="Okura V.K."/>
            <person name="Oliveira M.C."/>
            <person name="Oliveira V.R."/>
            <person name="Pereira H.A."/>
            <person name="Rossi A."/>
            <person name="Sena J.A.D."/>
            <person name="Silva C."/>
            <person name="de Souza R.F."/>
            <person name="Spinola L.A.F."/>
            <person name="Takita M.A."/>
            <person name="Tamura R.E."/>
            <person name="Teixeira E.C."/>
            <person name="Tezza R.I.D."/>
            <person name="Trindade dos Santos M."/>
            <person name="Truffi D."/>
            <person name="Tsai S.M."/>
            <person name="White F.F."/>
            <person name="Setubal J.C."/>
            <person name="Kitajima J.P."/>
        </authorList>
    </citation>
    <scope>NUCLEOTIDE SEQUENCE [LARGE SCALE GENOMIC DNA]</scope>
    <source>
        <strain>306</strain>
    </source>
</reference>
<evidence type="ECO:0000255" key="1">
    <source>
        <dbReference type="HAMAP-Rule" id="MF_00736"/>
    </source>
</evidence>
<evidence type="ECO:0000305" key="2"/>
<organism>
    <name type="scientific">Xanthomonas axonopodis pv. citri (strain 306)</name>
    <dbReference type="NCBI Taxonomy" id="190486"/>
    <lineage>
        <taxon>Bacteria</taxon>
        <taxon>Pseudomonadati</taxon>
        <taxon>Pseudomonadota</taxon>
        <taxon>Gammaproteobacteria</taxon>
        <taxon>Lysobacterales</taxon>
        <taxon>Lysobacteraceae</taxon>
        <taxon>Xanthomonas</taxon>
    </lineage>
</organism>
<dbReference type="EMBL" id="AE008923">
    <property type="protein sequence ID" value="AAM35844.1"/>
    <property type="molecule type" value="Genomic_DNA"/>
</dbReference>
<dbReference type="RefSeq" id="WP_003486749.1">
    <property type="nucleotide sequence ID" value="NC_003919.1"/>
</dbReference>
<dbReference type="SMR" id="Q8PNT4"/>
<dbReference type="GeneID" id="66910147"/>
<dbReference type="KEGG" id="xac:XAC0961"/>
<dbReference type="eggNOG" id="COG0080">
    <property type="taxonomic scope" value="Bacteria"/>
</dbReference>
<dbReference type="HOGENOM" id="CLU_074237_2_0_6"/>
<dbReference type="Proteomes" id="UP000000576">
    <property type="component" value="Chromosome"/>
</dbReference>
<dbReference type="GO" id="GO:0022625">
    <property type="term" value="C:cytosolic large ribosomal subunit"/>
    <property type="evidence" value="ECO:0007669"/>
    <property type="project" value="TreeGrafter"/>
</dbReference>
<dbReference type="GO" id="GO:0070180">
    <property type="term" value="F:large ribosomal subunit rRNA binding"/>
    <property type="evidence" value="ECO:0007669"/>
    <property type="project" value="UniProtKB-UniRule"/>
</dbReference>
<dbReference type="GO" id="GO:0003735">
    <property type="term" value="F:structural constituent of ribosome"/>
    <property type="evidence" value="ECO:0007669"/>
    <property type="project" value="InterPro"/>
</dbReference>
<dbReference type="GO" id="GO:0006412">
    <property type="term" value="P:translation"/>
    <property type="evidence" value="ECO:0007669"/>
    <property type="project" value="UniProtKB-UniRule"/>
</dbReference>
<dbReference type="CDD" id="cd00349">
    <property type="entry name" value="Ribosomal_L11"/>
    <property type="match status" value="1"/>
</dbReference>
<dbReference type="FunFam" id="1.10.10.250:FF:000001">
    <property type="entry name" value="50S ribosomal protein L11"/>
    <property type="match status" value="1"/>
</dbReference>
<dbReference type="FunFam" id="3.30.1550.10:FF:000001">
    <property type="entry name" value="50S ribosomal protein L11"/>
    <property type="match status" value="1"/>
</dbReference>
<dbReference type="Gene3D" id="1.10.10.250">
    <property type="entry name" value="Ribosomal protein L11, C-terminal domain"/>
    <property type="match status" value="1"/>
</dbReference>
<dbReference type="Gene3D" id="3.30.1550.10">
    <property type="entry name" value="Ribosomal protein L11/L12, N-terminal domain"/>
    <property type="match status" value="1"/>
</dbReference>
<dbReference type="HAMAP" id="MF_00736">
    <property type="entry name" value="Ribosomal_uL11"/>
    <property type="match status" value="1"/>
</dbReference>
<dbReference type="InterPro" id="IPR000911">
    <property type="entry name" value="Ribosomal_uL11"/>
</dbReference>
<dbReference type="InterPro" id="IPR006519">
    <property type="entry name" value="Ribosomal_uL11_bac-typ"/>
</dbReference>
<dbReference type="InterPro" id="IPR020783">
    <property type="entry name" value="Ribosomal_uL11_C"/>
</dbReference>
<dbReference type="InterPro" id="IPR036769">
    <property type="entry name" value="Ribosomal_uL11_C_sf"/>
</dbReference>
<dbReference type="InterPro" id="IPR020785">
    <property type="entry name" value="Ribosomal_uL11_CS"/>
</dbReference>
<dbReference type="InterPro" id="IPR020784">
    <property type="entry name" value="Ribosomal_uL11_N"/>
</dbReference>
<dbReference type="InterPro" id="IPR036796">
    <property type="entry name" value="Ribosomal_uL11_N_sf"/>
</dbReference>
<dbReference type="NCBIfam" id="TIGR01632">
    <property type="entry name" value="L11_bact"/>
    <property type="match status" value="1"/>
</dbReference>
<dbReference type="PANTHER" id="PTHR11661">
    <property type="entry name" value="60S RIBOSOMAL PROTEIN L12"/>
    <property type="match status" value="1"/>
</dbReference>
<dbReference type="PANTHER" id="PTHR11661:SF1">
    <property type="entry name" value="LARGE RIBOSOMAL SUBUNIT PROTEIN UL11M"/>
    <property type="match status" value="1"/>
</dbReference>
<dbReference type="Pfam" id="PF00298">
    <property type="entry name" value="Ribosomal_L11"/>
    <property type="match status" value="1"/>
</dbReference>
<dbReference type="Pfam" id="PF03946">
    <property type="entry name" value="Ribosomal_L11_N"/>
    <property type="match status" value="1"/>
</dbReference>
<dbReference type="SMART" id="SM00649">
    <property type="entry name" value="RL11"/>
    <property type="match status" value="1"/>
</dbReference>
<dbReference type="SUPFAM" id="SSF54747">
    <property type="entry name" value="Ribosomal L11/L12e N-terminal domain"/>
    <property type="match status" value="1"/>
</dbReference>
<dbReference type="SUPFAM" id="SSF46906">
    <property type="entry name" value="Ribosomal protein L11, C-terminal domain"/>
    <property type="match status" value="1"/>
</dbReference>
<dbReference type="PROSITE" id="PS00359">
    <property type="entry name" value="RIBOSOMAL_L11"/>
    <property type="match status" value="1"/>
</dbReference>
<protein>
    <recommendedName>
        <fullName evidence="1">Large ribosomal subunit protein uL11</fullName>
    </recommendedName>
    <alternativeName>
        <fullName evidence="2">50S ribosomal protein L11</fullName>
    </alternativeName>
</protein>
<proteinExistence type="inferred from homology"/>
<comment type="function">
    <text evidence="1">Forms part of the ribosomal stalk which helps the ribosome interact with GTP-bound translation factors.</text>
</comment>
<comment type="subunit">
    <text evidence="1">Part of the ribosomal stalk of the 50S ribosomal subunit. Interacts with L10 and the large rRNA to form the base of the stalk. L10 forms an elongated spine to which L12 dimers bind in a sequential fashion forming a multimeric L10(L12)X complex.</text>
</comment>
<comment type="PTM">
    <text evidence="1">One or more lysine residues are methylated.</text>
</comment>
<comment type="similarity">
    <text evidence="1">Belongs to the universal ribosomal protein uL11 family.</text>
</comment>
<sequence length="142" mass="14840">MAKKITAFIKLQVKAGQANPAPPVGPALGQRGLNIMEFCKAFNAATSKLEPGLPTPVIITAYSDRTFTFVTKSTPASVLLKKAAGVSSGSKRPNTDKVGKVTRKQLEEIAKVKEADLTAAELEAAVRTIAGSARSMGLTVEG</sequence>
<accession>Q8PNT4</accession>
<name>RL11_XANAC</name>
<feature type="chain" id="PRO_0000104414" description="Large ribosomal subunit protein uL11">
    <location>
        <begin position="1"/>
        <end position="142"/>
    </location>
</feature>
<keyword id="KW-0488">Methylation</keyword>
<keyword id="KW-0687">Ribonucleoprotein</keyword>
<keyword id="KW-0689">Ribosomal protein</keyword>
<keyword id="KW-0694">RNA-binding</keyword>
<keyword id="KW-0699">rRNA-binding</keyword>
<gene>
    <name evidence="1" type="primary">rplK</name>
    <name type="ordered locus">XAC0961</name>
</gene>